<gene>
    <name evidence="6" type="primary">DHNAT1</name>
    <name evidence="10" type="ordered locus">At1g48320</name>
    <name evidence="11" type="ORF">F11A17.13</name>
</gene>
<dbReference type="EC" id="3.1.2.-" evidence="7"/>
<dbReference type="EMBL" id="AC007932">
    <property type="protein sequence ID" value="AAD49765.1"/>
    <property type="molecule type" value="Genomic_DNA"/>
</dbReference>
<dbReference type="EMBL" id="CP002684">
    <property type="protein sequence ID" value="AEE32274.1"/>
    <property type="molecule type" value="Genomic_DNA"/>
</dbReference>
<dbReference type="EMBL" id="BT010185">
    <property type="protein sequence ID" value="AAQ22654.1"/>
    <property type="molecule type" value="mRNA"/>
</dbReference>
<dbReference type="EMBL" id="AK229541">
    <property type="protein sequence ID" value="BAF01394.1"/>
    <property type="molecule type" value="mRNA"/>
</dbReference>
<dbReference type="PIR" id="B96523">
    <property type="entry name" value="B96523"/>
</dbReference>
<dbReference type="RefSeq" id="NP_175266.1">
    <property type="nucleotide sequence ID" value="NM_103729.3"/>
</dbReference>
<dbReference type="PDB" id="4K02">
    <property type="method" value="X-ray"/>
    <property type="resolution" value="1.90 A"/>
    <property type="chains" value="A/B=1-156"/>
</dbReference>
<dbReference type="PDBsum" id="4K02"/>
<dbReference type="SMR" id="Q9SX65"/>
<dbReference type="FunCoup" id="Q9SX65">
    <property type="interactions" value="245"/>
</dbReference>
<dbReference type="IntAct" id="Q9SX65">
    <property type="interactions" value="1"/>
</dbReference>
<dbReference type="STRING" id="3702.Q9SX65"/>
<dbReference type="PaxDb" id="3702-AT1G48320.1"/>
<dbReference type="ProteomicsDB" id="222157"/>
<dbReference type="EnsemblPlants" id="AT1G48320.1">
    <property type="protein sequence ID" value="AT1G48320.1"/>
    <property type="gene ID" value="AT1G48320"/>
</dbReference>
<dbReference type="GeneID" id="841252"/>
<dbReference type="Gramene" id="AT1G48320.1">
    <property type="protein sequence ID" value="AT1G48320.1"/>
    <property type="gene ID" value="AT1G48320"/>
</dbReference>
<dbReference type="KEGG" id="ath:AT1G48320"/>
<dbReference type="Araport" id="AT1G48320"/>
<dbReference type="TAIR" id="AT1G48320">
    <property type="gene designation" value="DHNAT1"/>
</dbReference>
<dbReference type="eggNOG" id="KOG3328">
    <property type="taxonomic scope" value="Eukaryota"/>
</dbReference>
<dbReference type="HOGENOM" id="CLU_089876_2_0_1"/>
<dbReference type="InParanoid" id="Q9SX65"/>
<dbReference type="OMA" id="STGAHMA"/>
<dbReference type="OrthoDB" id="46529at2759"/>
<dbReference type="PhylomeDB" id="Q9SX65"/>
<dbReference type="BRENDA" id="3.1.2.28">
    <property type="organism ID" value="399"/>
</dbReference>
<dbReference type="UniPathway" id="UPA00995"/>
<dbReference type="UniPathway" id="UPA01057">
    <property type="reaction ID" value="UER01033"/>
</dbReference>
<dbReference type="EvolutionaryTrace" id="Q9SX65"/>
<dbReference type="PRO" id="PR:Q9SX65"/>
<dbReference type="Proteomes" id="UP000006548">
    <property type="component" value="Chromosome 1"/>
</dbReference>
<dbReference type="ExpressionAtlas" id="Q9SX65">
    <property type="expression patterns" value="baseline and differential"/>
</dbReference>
<dbReference type="GO" id="GO:0005777">
    <property type="term" value="C:peroxisome"/>
    <property type="evidence" value="ECO:0000314"/>
    <property type="project" value="TAIR"/>
</dbReference>
<dbReference type="GO" id="GO:0016787">
    <property type="term" value="F:hydrolase activity"/>
    <property type="evidence" value="ECO:0007669"/>
    <property type="project" value="UniProtKB-KW"/>
</dbReference>
<dbReference type="GO" id="GO:0042372">
    <property type="term" value="P:phylloquinone biosynthetic process"/>
    <property type="evidence" value="ECO:0000315"/>
    <property type="project" value="TAIR"/>
</dbReference>
<dbReference type="GO" id="GO:0051289">
    <property type="term" value="P:protein homotetramerization"/>
    <property type="evidence" value="ECO:0000314"/>
    <property type="project" value="UniProtKB"/>
</dbReference>
<dbReference type="CDD" id="cd03443">
    <property type="entry name" value="PaaI_thioesterase"/>
    <property type="match status" value="1"/>
</dbReference>
<dbReference type="FunFam" id="3.10.129.10:FF:000048">
    <property type="entry name" value="14-dihydroxy-2-naphthoyl-CoA thioesterase 1"/>
    <property type="match status" value="1"/>
</dbReference>
<dbReference type="Gene3D" id="3.10.129.10">
    <property type="entry name" value="Hotdog Thioesterase"/>
    <property type="match status" value="1"/>
</dbReference>
<dbReference type="InterPro" id="IPR029069">
    <property type="entry name" value="HotDog_dom_sf"/>
</dbReference>
<dbReference type="InterPro" id="IPR003736">
    <property type="entry name" value="PAAI_dom"/>
</dbReference>
<dbReference type="InterPro" id="IPR006683">
    <property type="entry name" value="Thioestr_dom"/>
</dbReference>
<dbReference type="NCBIfam" id="TIGR00369">
    <property type="entry name" value="unchar_dom_1"/>
    <property type="match status" value="1"/>
</dbReference>
<dbReference type="PANTHER" id="PTHR43240">
    <property type="entry name" value="1,4-DIHYDROXY-2-NAPHTHOYL-COA THIOESTERASE 1"/>
    <property type="match status" value="1"/>
</dbReference>
<dbReference type="PANTHER" id="PTHR43240:SF5">
    <property type="entry name" value="1,4-DIHYDROXY-2-NAPHTHOYL-COA THIOESTERASE 1"/>
    <property type="match status" value="1"/>
</dbReference>
<dbReference type="Pfam" id="PF03061">
    <property type="entry name" value="4HBT"/>
    <property type="match status" value="1"/>
</dbReference>
<dbReference type="SUPFAM" id="SSF54637">
    <property type="entry name" value="Thioesterase/thiol ester dehydrase-isomerase"/>
    <property type="match status" value="1"/>
</dbReference>
<comment type="function">
    <text evidence="4">Catalyzes the hydrolysis of the thioester bond of 1,4-dihydroxy-2-naphthoyl-CoA (DHNA-CoA) in peroxisomes, a necessary step to form the naphthoquinone ring of phylloquinone (vitamin K(1)). Is not active on benzoyl-CoA, phenylacetyl-CoA, succinyl-CoA and palmitoyl-CoA thioesters.</text>
</comment>
<comment type="pathway">
    <text evidence="8">Cofactor biosynthesis; phylloquinone biosynthesis.</text>
</comment>
<comment type="pathway">
    <text evidence="8">Quinol/quinone metabolism; 1,4-dihydroxy-2-naphthoate biosynthesis; 1,4-dihydroxy-2-naphthoate from chorismate: step 7/7.</text>
</comment>
<comment type="subunit">
    <text evidence="5">Homotetramers.</text>
</comment>
<comment type="subcellular location">
    <subcellularLocation>
        <location evidence="3 4">Peroxisome</location>
    </subcellularLocation>
</comment>
<comment type="tissue specificity">
    <text evidence="2">Mostly expressed in roots, stems, leaves and siliques.</text>
</comment>
<comment type="disruption phenotype">
    <text evidence="4">Reduced DHNA-CoA thioesterase activity and phylloquinone content.</text>
</comment>
<comment type="miscellaneous">
    <text evidence="6">May originate from a horizontal gene transfer with a bacterial species of the Lactobacillales order.</text>
</comment>
<comment type="similarity">
    <text evidence="7">Belongs to the 4-hydroxybenzoyl-CoA thioesterase family. DHNA-CoA hydrolase subfamily.</text>
</comment>
<sequence>MDSASSNTKAIDPPLHMLGFEFDELSPTRITGRLPVSPVCCQPFKVLHGGVSALIAESLASMGAHMASGFKRVAGIQLSINHLKSADLGDLVFAEATPVSTGKTIQVWEVKLWKTTQKDKANKILISSSRVTLICNLPIPDNAKDAANMLKMVAKL</sequence>
<accession>Q9SX65</accession>
<feature type="chain" id="PRO_0000432099" description="1,4-dihydroxy-2-naphthoyl-CoA thioesterase 1">
    <location>
        <begin position="1"/>
        <end position="156"/>
    </location>
</feature>
<feature type="short sequence motif" description="Microbody targeting signal" evidence="1">
    <location>
        <begin position="154"/>
        <end position="156"/>
    </location>
</feature>
<feature type="active site" evidence="9">
    <location>
        <position position="57"/>
    </location>
</feature>
<feature type="helix" evidence="13">
    <location>
        <begin position="13"/>
        <end position="17"/>
    </location>
</feature>
<feature type="strand" evidence="13">
    <location>
        <begin position="21"/>
        <end position="26"/>
    </location>
</feature>
<feature type="strand" evidence="13">
    <location>
        <begin position="29"/>
        <end position="35"/>
    </location>
</feature>
<feature type="helix" evidence="13">
    <location>
        <begin position="38"/>
        <end position="40"/>
    </location>
</feature>
<feature type="turn" evidence="13">
    <location>
        <begin position="43"/>
        <end position="45"/>
    </location>
</feature>
<feature type="helix" evidence="13">
    <location>
        <begin position="49"/>
        <end position="67"/>
    </location>
</feature>
<feature type="strand" evidence="13">
    <location>
        <begin position="73"/>
        <end position="82"/>
    </location>
</feature>
<feature type="strand" evidence="13">
    <location>
        <begin position="91"/>
        <end position="101"/>
    </location>
</feature>
<feature type="strand" evidence="13">
    <location>
        <begin position="103"/>
        <end position="115"/>
    </location>
</feature>
<feature type="strand" evidence="13">
    <location>
        <begin position="124"/>
        <end position="135"/>
    </location>
</feature>
<protein>
    <recommendedName>
        <fullName evidence="6">1,4-dihydroxy-2-naphthoyl-CoA thioesterase 1</fullName>
        <shortName evidence="6">AtDHNAT1</shortName>
        <shortName evidence="6">DHNA-CoA thioesterase 1</shortName>
        <ecNumber evidence="7">3.1.2.-</ecNumber>
    </recommendedName>
</protein>
<keyword id="KW-0002">3D-structure</keyword>
<keyword id="KW-0378">Hydrolase</keyword>
<keyword id="KW-0576">Peroxisome</keyword>
<keyword id="KW-1185">Reference proteome</keyword>
<reference key="1">
    <citation type="journal article" date="2000" name="Nature">
        <title>Sequence and analysis of chromosome 1 of the plant Arabidopsis thaliana.</title>
        <authorList>
            <person name="Theologis A."/>
            <person name="Ecker J.R."/>
            <person name="Palm C.J."/>
            <person name="Federspiel N.A."/>
            <person name="Kaul S."/>
            <person name="White O."/>
            <person name="Alonso J."/>
            <person name="Altafi H."/>
            <person name="Araujo R."/>
            <person name="Bowman C.L."/>
            <person name="Brooks S.Y."/>
            <person name="Buehler E."/>
            <person name="Chan A."/>
            <person name="Chao Q."/>
            <person name="Chen H."/>
            <person name="Cheuk R.F."/>
            <person name="Chin C.W."/>
            <person name="Chung M.K."/>
            <person name="Conn L."/>
            <person name="Conway A.B."/>
            <person name="Conway A.R."/>
            <person name="Creasy T.H."/>
            <person name="Dewar K."/>
            <person name="Dunn P."/>
            <person name="Etgu P."/>
            <person name="Feldblyum T.V."/>
            <person name="Feng J.-D."/>
            <person name="Fong B."/>
            <person name="Fujii C.Y."/>
            <person name="Gill J.E."/>
            <person name="Goldsmith A.D."/>
            <person name="Haas B."/>
            <person name="Hansen N.F."/>
            <person name="Hughes B."/>
            <person name="Huizar L."/>
            <person name="Hunter J.L."/>
            <person name="Jenkins J."/>
            <person name="Johnson-Hopson C."/>
            <person name="Khan S."/>
            <person name="Khaykin E."/>
            <person name="Kim C.J."/>
            <person name="Koo H.L."/>
            <person name="Kremenetskaia I."/>
            <person name="Kurtz D.B."/>
            <person name="Kwan A."/>
            <person name="Lam B."/>
            <person name="Langin-Hooper S."/>
            <person name="Lee A."/>
            <person name="Lee J.M."/>
            <person name="Lenz C.A."/>
            <person name="Li J.H."/>
            <person name="Li Y.-P."/>
            <person name="Lin X."/>
            <person name="Liu S.X."/>
            <person name="Liu Z.A."/>
            <person name="Luros J.S."/>
            <person name="Maiti R."/>
            <person name="Marziali A."/>
            <person name="Militscher J."/>
            <person name="Miranda M."/>
            <person name="Nguyen M."/>
            <person name="Nierman W.C."/>
            <person name="Osborne B.I."/>
            <person name="Pai G."/>
            <person name="Peterson J."/>
            <person name="Pham P.K."/>
            <person name="Rizzo M."/>
            <person name="Rooney T."/>
            <person name="Rowley D."/>
            <person name="Sakano H."/>
            <person name="Salzberg S.L."/>
            <person name="Schwartz J.R."/>
            <person name="Shinn P."/>
            <person name="Southwick A.M."/>
            <person name="Sun H."/>
            <person name="Tallon L.J."/>
            <person name="Tambunga G."/>
            <person name="Toriumi M.J."/>
            <person name="Town C.D."/>
            <person name="Utterback T."/>
            <person name="Van Aken S."/>
            <person name="Vaysberg M."/>
            <person name="Vysotskaia V.S."/>
            <person name="Walker M."/>
            <person name="Wu D."/>
            <person name="Yu G."/>
            <person name="Fraser C.M."/>
            <person name="Venter J.C."/>
            <person name="Davis R.W."/>
        </authorList>
    </citation>
    <scope>NUCLEOTIDE SEQUENCE [LARGE SCALE GENOMIC DNA]</scope>
    <source>
        <strain>cv. Columbia</strain>
    </source>
</reference>
<reference key="2">
    <citation type="journal article" date="2017" name="Plant J.">
        <title>Araport11: a complete reannotation of the Arabidopsis thaliana reference genome.</title>
        <authorList>
            <person name="Cheng C.Y."/>
            <person name="Krishnakumar V."/>
            <person name="Chan A.P."/>
            <person name="Thibaud-Nissen F."/>
            <person name="Schobel S."/>
            <person name="Town C.D."/>
        </authorList>
    </citation>
    <scope>GENOME REANNOTATION</scope>
    <source>
        <strain>cv. Columbia</strain>
    </source>
</reference>
<reference key="3">
    <citation type="journal article" date="2003" name="Science">
        <title>Empirical analysis of transcriptional activity in the Arabidopsis genome.</title>
        <authorList>
            <person name="Yamada K."/>
            <person name="Lim J."/>
            <person name="Dale J.M."/>
            <person name="Chen H."/>
            <person name="Shinn P."/>
            <person name="Palm C.J."/>
            <person name="Southwick A.M."/>
            <person name="Wu H.C."/>
            <person name="Kim C.J."/>
            <person name="Nguyen M."/>
            <person name="Pham P.K."/>
            <person name="Cheuk R.F."/>
            <person name="Karlin-Newmann G."/>
            <person name="Liu S.X."/>
            <person name="Lam B."/>
            <person name="Sakano H."/>
            <person name="Wu T."/>
            <person name="Yu G."/>
            <person name="Miranda M."/>
            <person name="Quach H.L."/>
            <person name="Tripp M."/>
            <person name="Chang C.H."/>
            <person name="Lee J.M."/>
            <person name="Toriumi M.J."/>
            <person name="Chan M.M."/>
            <person name="Tang C.C."/>
            <person name="Onodera C.S."/>
            <person name="Deng J.M."/>
            <person name="Akiyama K."/>
            <person name="Ansari Y."/>
            <person name="Arakawa T."/>
            <person name="Banh J."/>
            <person name="Banno F."/>
            <person name="Bowser L."/>
            <person name="Brooks S.Y."/>
            <person name="Carninci P."/>
            <person name="Chao Q."/>
            <person name="Choy N."/>
            <person name="Enju A."/>
            <person name="Goldsmith A.D."/>
            <person name="Gurjal M."/>
            <person name="Hansen N.F."/>
            <person name="Hayashizaki Y."/>
            <person name="Johnson-Hopson C."/>
            <person name="Hsuan V.W."/>
            <person name="Iida K."/>
            <person name="Karnes M."/>
            <person name="Khan S."/>
            <person name="Koesema E."/>
            <person name="Ishida J."/>
            <person name="Jiang P.X."/>
            <person name="Jones T."/>
            <person name="Kawai J."/>
            <person name="Kamiya A."/>
            <person name="Meyers C."/>
            <person name="Nakajima M."/>
            <person name="Narusaka M."/>
            <person name="Seki M."/>
            <person name="Sakurai T."/>
            <person name="Satou M."/>
            <person name="Tamse R."/>
            <person name="Vaysberg M."/>
            <person name="Wallender E.K."/>
            <person name="Wong C."/>
            <person name="Yamamura Y."/>
            <person name="Yuan S."/>
            <person name="Shinozaki K."/>
            <person name="Davis R.W."/>
            <person name="Theologis A."/>
            <person name="Ecker J.R."/>
        </authorList>
    </citation>
    <scope>NUCLEOTIDE SEQUENCE [LARGE SCALE MRNA]</scope>
    <source>
        <strain>cv. Columbia</strain>
    </source>
</reference>
<reference key="4">
    <citation type="submission" date="2006-07" db="EMBL/GenBank/DDBJ databases">
        <title>Large-scale analysis of RIKEN Arabidopsis full-length (RAFL) cDNAs.</title>
        <authorList>
            <person name="Totoki Y."/>
            <person name="Seki M."/>
            <person name="Ishida J."/>
            <person name="Nakajima M."/>
            <person name="Enju A."/>
            <person name="Kamiya A."/>
            <person name="Narusaka M."/>
            <person name="Shin-i T."/>
            <person name="Nakagawa M."/>
            <person name="Sakamoto N."/>
            <person name="Oishi K."/>
            <person name="Kohara Y."/>
            <person name="Kobayashi M."/>
            <person name="Toyoda A."/>
            <person name="Sakaki Y."/>
            <person name="Sakurai T."/>
            <person name="Iida K."/>
            <person name="Akiyama K."/>
            <person name="Satou M."/>
            <person name="Toyoda T."/>
            <person name="Konagaya A."/>
            <person name="Carninci P."/>
            <person name="Kawai J."/>
            <person name="Hayashizaki Y."/>
            <person name="Shinozaki K."/>
        </authorList>
    </citation>
    <scope>NUCLEOTIDE SEQUENCE [LARGE SCALE MRNA]</scope>
    <source>
        <strain>cv. Columbia</strain>
    </source>
</reference>
<reference key="5">
    <citation type="journal article" date="2003" name="Plant Cell Physiol.">
        <title>Functional differentiation of peroxisomes revealed by expression profiles of peroxisomal genes in Arabidopsis thaliana.</title>
        <authorList>
            <person name="Kamada T."/>
            <person name="Nito K."/>
            <person name="Hayashi H."/>
            <person name="Mano S."/>
            <person name="Hayashi M."/>
            <person name="Nishimura M."/>
        </authorList>
    </citation>
    <scope>TISSUE SPECIFICITY</scope>
    <source>
        <strain>cv. Columbia</strain>
    </source>
</reference>
<reference key="6">
    <citation type="journal article" date="2004" name="Plant Physiol.">
        <title>AraPerox. A database of putative Arabidopsis proteins from plant peroxisomes.</title>
        <authorList>
            <person name="Reumann S."/>
            <person name="Ma C."/>
            <person name="Lemke S."/>
            <person name="Babujee L."/>
        </authorList>
    </citation>
    <scope>WEB RESOURCE</scope>
</reference>
<reference key="7">
    <citation type="journal article" date="2009" name="Plant Physiol.">
        <title>In-depth proteome analysis of Arabidopsis leaf peroxisomes combined with in vivo subcellular targeting verification indicates novel metabolic and regulatory functions of peroxisomes.</title>
        <authorList>
            <person name="Reumann S."/>
            <person name="Quan S."/>
            <person name="Aung K."/>
            <person name="Yang P."/>
            <person name="Manandhar-Shrestha K."/>
            <person name="Holbrook D."/>
            <person name="Linka N."/>
            <person name="Switzenberg R."/>
            <person name="Wilkerson C.G."/>
            <person name="Weber A.P."/>
            <person name="Olsen L.J."/>
            <person name="Hu J."/>
        </authorList>
    </citation>
    <scope>SUBCELLULAR LOCATION</scope>
</reference>
<reference key="8">
    <citation type="journal article" date="2012" name="Plant J.">
        <title>Phylloquinone (vitamin K(1)) biosynthesis in plants: two peroxisomal thioesterases of Lactobacillales origin hydrolyze 1,4-dihydroxy-2-naphthoyl-CoA.</title>
        <authorList>
            <person name="Widhalm J.R."/>
            <person name="Ducluzeau A.-L."/>
            <person name="Buller N.E."/>
            <person name="Elowsky C.G."/>
            <person name="Olsen L.J."/>
            <person name="Basset G.J.C."/>
        </authorList>
    </citation>
    <scope>FUNCTION</scope>
    <scope>PATHWAY</scope>
    <scope>SUBCELLULAR LOCATION</scope>
    <scope>DISRUPTION PHENOTYPE</scope>
</reference>
<reference key="9">
    <citation type="journal article" date="2013" name="Acta Crystallogr. D">
        <title>Functional convergence of structurally distinct thioesterases from cyanobacteria and plants involved in phylloquinone biosynthesis.</title>
        <authorList>
            <person name="Furt F."/>
            <person name="Allen W.J."/>
            <person name="Widhalm J.R."/>
            <person name="Madzelan P."/>
            <person name="Rizzo R.C."/>
            <person name="Basset G."/>
            <person name="Wilson M.A."/>
        </authorList>
    </citation>
    <scope>X-RAY CRYSTALLOGRAPHY (1.90 ANGSTROMS)</scope>
    <scope>SUBUNIT</scope>
    <scope>ACTIVE SITE</scope>
</reference>
<organism evidence="12">
    <name type="scientific">Arabidopsis thaliana</name>
    <name type="common">Mouse-ear cress</name>
    <dbReference type="NCBI Taxonomy" id="3702"/>
    <lineage>
        <taxon>Eukaryota</taxon>
        <taxon>Viridiplantae</taxon>
        <taxon>Streptophyta</taxon>
        <taxon>Embryophyta</taxon>
        <taxon>Tracheophyta</taxon>
        <taxon>Spermatophyta</taxon>
        <taxon>Magnoliopsida</taxon>
        <taxon>eudicotyledons</taxon>
        <taxon>Gunneridae</taxon>
        <taxon>Pentapetalae</taxon>
        <taxon>rosids</taxon>
        <taxon>malvids</taxon>
        <taxon>Brassicales</taxon>
        <taxon>Brassicaceae</taxon>
        <taxon>Camelineae</taxon>
        <taxon>Arabidopsis</taxon>
    </lineage>
</organism>
<name>DNAT1_ARATH</name>
<evidence type="ECO:0000255" key="1"/>
<evidence type="ECO:0000269" key="2">
    <source>
    </source>
</evidence>
<evidence type="ECO:0000269" key="3">
    <source>
    </source>
</evidence>
<evidence type="ECO:0000269" key="4">
    <source>
    </source>
</evidence>
<evidence type="ECO:0000269" key="5">
    <source>
    </source>
</evidence>
<evidence type="ECO:0000303" key="6">
    <source>
    </source>
</evidence>
<evidence type="ECO:0000305" key="7"/>
<evidence type="ECO:0000305" key="8">
    <source>
    </source>
</evidence>
<evidence type="ECO:0000305" key="9">
    <source>
    </source>
</evidence>
<evidence type="ECO:0000312" key="10">
    <source>
        <dbReference type="Araport" id="AT1G48320"/>
    </source>
</evidence>
<evidence type="ECO:0000312" key="11">
    <source>
        <dbReference type="EMBL" id="AAD49765.1"/>
    </source>
</evidence>
<evidence type="ECO:0000312" key="12">
    <source>
        <dbReference type="Proteomes" id="UP000006548"/>
    </source>
</evidence>
<evidence type="ECO:0007829" key="13">
    <source>
        <dbReference type="PDB" id="4K02"/>
    </source>
</evidence>
<proteinExistence type="evidence at protein level"/>